<dbReference type="EC" id="2.7.7.6" evidence="1"/>
<dbReference type="EMBL" id="AE009947">
    <property type="protein sequence ID" value="AAT44686.1"/>
    <property type="molecule type" value="Genomic_DNA"/>
</dbReference>
<dbReference type="SMR" id="Q6L3A6"/>
<dbReference type="GO" id="GO:0009507">
    <property type="term" value="C:chloroplast"/>
    <property type="evidence" value="ECO:0007669"/>
    <property type="project" value="UniProtKB-SubCell"/>
</dbReference>
<dbReference type="GO" id="GO:0000428">
    <property type="term" value="C:DNA-directed RNA polymerase complex"/>
    <property type="evidence" value="ECO:0007669"/>
    <property type="project" value="UniProtKB-KW"/>
</dbReference>
<dbReference type="GO" id="GO:0005739">
    <property type="term" value="C:mitochondrion"/>
    <property type="evidence" value="ECO:0007669"/>
    <property type="project" value="GOC"/>
</dbReference>
<dbReference type="GO" id="GO:0003677">
    <property type="term" value="F:DNA binding"/>
    <property type="evidence" value="ECO:0007669"/>
    <property type="project" value="UniProtKB-UniRule"/>
</dbReference>
<dbReference type="GO" id="GO:0003899">
    <property type="term" value="F:DNA-directed RNA polymerase activity"/>
    <property type="evidence" value="ECO:0007669"/>
    <property type="project" value="UniProtKB-UniRule"/>
</dbReference>
<dbReference type="GO" id="GO:0000287">
    <property type="term" value="F:magnesium ion binding"/>
    <property type="evidence" value="ECO:0007669"/>
    <property type="project" value="UniProtKB-UniRule"/>
</dbReference>
<dbReference type="GO" id="GO:0008270">
    <property type="term" value="F:zinc ion binding"/>
    <property type="evidence" value="ECO:0007669"/>
    <property type="project" value="UniProtKB-UniRule"/>
</dbReference>
<dbReference type="GO" id="GO:0006351">
    <property type="term" value="P:DNA-templated transcription"/>
    <property type="evidence" value="ECO:0007669"/>
    <property type="project" value="UniProtKB-UniRule"/>
</dbReference>
<dbReference type="Gene3D" id="1.10.40.90">
    <property type="match status" value="1"/>
</dbReference>
<dbReference type="Gene3D" id="2.40.40.20">
    <property type="match status" value="1"/>
</dbReference>
<dbReference type="Gene3D" id="4.10.860.120">
    <property type="entry name" value="RNA polymerase II, clamp domain"/>
    <property type="match status" value="1"/>
</dbReference>
<dbReference type="Gene3D" id="1.10.274.100">
    <property type="entry name" value="RNA polymerase Rpb1, domain 3"/>
    <property type="match status" value="1"/>
</dbReference>
<dbReference type="HAMAP" id="MF_01323">
    <property type="entry name" value="RNApol_bact_RpoC1"/>
    <property type="match status" value="1"/>
</dbReference>
<dbReference type="InterPro" id="IPR045867">
    <property type="entry name" value="DNA-dir_RpoC_beta_prime"/>
</dbReference>
<dbReference type="InterPro" id="IPR000722">
    <property type="entry name" value="RNA_pol_asu"/>
</dbReference>
<dbReference type="InterPro" id="IPR006592">
    <property type="entry name" value="RNA_pol_N"/>
</dbReference>
<dbReference type="InterPro" id="IPR007080">
    <property type="entry name" value="RNA_pol_Rpb1_1"/>
</dbReference>
<dbReference type="InterPro" id="IPR042102">
    <property type="entry name" value="RNA_pol_Rpb1_3_sf"/>
</dbReference>
<dbReference type="InterPro" id="IPR044893">
    <property type="entry name" value="RNA_pol_Rpb1_clamp_domain"/>
</dbReference>
<dbReference type="InterPro" id="IPR034678">
    <property type="entry name" value="RNApol_RpoC1"/>
</dbReference>
<dbReference type="PANTHER" id="PTHR19376">
    <property type="entry name" value="DNA-DIRECTED RNA POLYMERASE"/>
    <property type="match status" value="1"/>
</dbReference>
<dbReference type="PANTHER" id="PTHR19376:SF54">
    <property type="entry name" value="DNA-DIRECTED RNA POLYMERASE SUBUNIT BETA"/>
    <property type="match status" value="1"/>
</dbReference>
<dbReference type="Pfam" id="PF04997">
    <property type="entry name" value="RNA_pol_Rpb1_1"/>
    <property type="match status" value="1"/>
</dbReference>
<dbReference type="Pfam" id="PF00623">
    <property type="entry name" value="RNA_pol_Rpb1_2"/>
    <property type="match status" value="2"/>
</dbReference>
<dbReference type="SMART" id="SM00663">
    <property type="entry name" value="RPOLA_N"/>
    <property type="match status" value="1"/>
</dbReference>
<dbReference type="SUPFAM" id="SSF64484">
    <property type="entry name" value="beta and beta-prime subunits of DNA dependent RNA-polymerase"/>
    <property type="match status" value="1"/>
</dbReference>
<organism>
    <name type="scientific">Saccharum hybrid</name>
    <name type="common">Sugarcane</name>
    <dbReference type="NCBI Taxonomy" id="15819"/>
    <lineage>
        <taxon>Eukaryota</taxon>
        <taxon>Viridiplantae</taxon>
        <taxon>Streptophyta</taxon>
        <taxon>Embryophyta</taxon>
        <taxon>Tracheophyta</taxon>
        <taxon>Spermatophyta</taxon>
        <taxon>Magnoliopsida</taxon>
        <taxon>Liliopsida</taxon>
        <taxon>Poales</taxon>
        <taxon>Poaceae</taxon>
        <taxon>PACMAD clade</taxon>
        <taxon>Panicoideae</taxon>
        <taxon>Andropogonodae</taxon>
        <taxon>Andropogoneae</taxon>
        <taxon>Saccharinae</taxon>
        <taxon>Saccharum</taxon>
    </lineage>
</organism>
<keyword id="KW-0150">Chloroplast</keyword>
<keyword id="KW-0240">DNA-directed RNA polymerase</keyword>
<keyword id="KW-0460">Magnesium</keyword>
<keyword id="KW-0479">Metal-binding</keyword>
<keyword id="KW-0548">Nucleotidyltransferase</keyword>
<keyword id="KW-0934">Plastid</keyword>
<keyword id="KW-0804">Transcription</keyword>
<keyword id="KW-0808">Transferase</keyword>
<keyword id="KW-0862">Zinc</keyword>
<comment type="function">
    <text evidence="1">DNA-dependent RNA polymerase catalyzes the transcription of DNA into RNA using the four ribonucleoside triphosphates as substrates.</text>
</comment>
<comment type="catalytic activity">
    <reaction evidence="1">
        <text>RNA(n) + a ribonucleoside 5'-triphosphate = RNA(n+1) + diphosphate</text>
        <dbReference type="Rhea" id="RHEA:21248"/>
        <dbReference type="Rhea" id="RHEA-COMP:14527"/>
        <dbReference type="Rhea" id="RHEA-COMP:17342"/>
        <dbReference type="ChEBI" id="CHEBI:33019"/>
        <dbReference type="ChEBI" id="CHEBI:61557"/>
        <dbReference type="ChEBI" id="CHEBI:140395"/>
        <dbReference type="EC" id="2.7.7.6"/>
    </reaction>
</comment>
<comment type="cofactor">
    <cofactor evidence="1">
        <name>Mg(2+)</name>
        <dbReference type="ChEBI" id="CHEBI:18420"/>
    </cofactor>
    <text evidence="1">Binds 1 Mg(2+) ion per subunit.</text>
</comment>
<comment type="cofactor">
    <cofactor evidence="1">
        <name>Zn(2+)</name>
        <dbReference type="ChEBI" id="CHEBI:29105"/>
    </cofactor>
    <text evidence="1">Binds 1 Zn(2+) ion per subunit.</text>
</comment>
<comment type="subunit">
    <text evidence="1">In plastids the minimal PEP RNA polymerase catalytic core is composed of four subunits: alpha, beta, beta', and beta''. When a (nuclear-encoded) sigma factor is associated with the core the holoenzyme is formed, which can initiate transcription.</text>
</comment>
<comment type="subcellular location">
    <subcellularLocation>
        <location evidence="1">Plastid</location>
        <location evidence="1">Chloroplast</location>
    </subcellularLocation>
</comment>
<comment type="similarity">
    <text evidence="1">Belongs to the RNA polymerase beta' chain family. RpoC1 subfamily.</text>
</comment>
<geneLocation type="chloroplast"/>
<reference key="1">
    <citation type="journal article" date="2004" name="Curr. Genet.">
        <title>Structural features and transcript-editing analysis of sugarcane (Saccharum officinarum L.) chloroplast genome.</title>
        <authorList>
            <person name="Calsa T. Jr."/>
            <person name="Carraro D.M."/>
            <person name="Benatti M.R."/>
            <person name="Barbosa A.C."/>
            <person name="Kitajima J.P."/>
            <person name="Carrer H."/>
        </authorList>
    </citation>
    <scope>NUCLEOTIDE SEQUENCE [LARGE SCALE GENOMIC DNA]</scope>
    <source>
        <strain>cv. SP-80-3280</strain>
    </source>
</reference>
<accession>Q6L3A6</accession>
<name>RPOC1_SACHY</name>
<evidence type="ECO:0000255" key="1">
    <source>
        <dbReference type="HAMAP-Rule" id="MF_01323"/>
    </source>
</evidence>
<sequence>MIDQYKHKQLQIGLVSPQQIKAWAKKILPNGEVVGEVTRPSTFHYKTDKPEKDGLFCERIFGPIKSGICACGNSRASVAENEDERFCQKCGVEFVDSRIRRYQMGYIKLACPVTHVWYLKGLPSYIANLLDKPLKKLEGLVYGDFSFARPSAKKPTFLRLRGLFEDEISSCNHSISPFFSTPGFATFRNREIATGAGAIREQLADLDLRIIIENSLVEWKELEDEGYSGDEWEDRKRRIRKVFLIRRMQLAKHFIQTNVEPEWMVLCLLPVLPPELRPIVYRSGDKVVTSDINELYKRVIRRNNNLAYLLKRSELAPADLVMCQEKLVQEAVDTLLDSGSRGQPMRDGHNKVYKSLSDVIEGKEGRFRETLLGKRVDYSGRSVIVVGPSLSLHQCGLPLEIAIKLFQLFVIRDLITKRATSNVRIAKRKIWEKEPIVWEILQEVMRGHPVLLNRAPTLHRLGIQAFQPTLVEGRTICLHPLVCKGFNADFDGDQMAVHLPLSLEAQAEARLLMFSHMNLLSPAIGDPICVPTQDMLIGLYVLTIGNRRGICANRYNSCGNSPNKKINYNNNNYYKYTKDKEPHFSSSYDALGAYRQKRIGLNSPLWLRWKLDQRIVGSREVPIEVQYESFGTYHEIYAHYLVVGNRKKEIRSIYIRTTLGHISFYREIEEAVQGFSRAYSYTI</sequence>
<proteinExistence type="inferred from homology"/>
<feature type="chain" id="PRO_0000067894" description="DNA-directed RNA polymerase subunit beta'">
    <location>
        <begin position="1"/>
        <end position="683"/>
    </location>
</feature>
<feature type="binding site" evidence="1">
    <location>
        <position position="69"/>
    </location>
    <ligand>
        <name>Zn(2+)</name>
        <dbReference type="ChEBI" id="CHEBI:29105"/>
    </ligand>
</feature>
<feature type="binding site" evidence="1">
    <location>
        <position position="71"/>
    </location>
    <ligand>
        <name>Zn(2+)</name>
        <dbReference type="ChEBI" id="CHEBI:29105"/>
    </ligand>
</feature>
<feature type="binding site" evidence="1">
    <location>
        <position position="87"/>
    </location>
    <ligand>
        <name>Zn(2+)</name>
        <dbReference type="ChEBI" id="CHEBI:29105"/>
    </ligand>
</feature>
<feature type="binding site" evidence="1">
    <location>
        <position position="90"/>
    </location>
    <ligand>
        <name>Zn(2+)</name>
        <dbReference type="ChEBI" id="CHEBI:29105"/>
    </ligand>
</feature>
<feature type="binding site" evidence="1">
    <location>
        <position position="489"/>
    </location>
    <ligand>
        <name>Mg(2+)</name>
        <dbReference type="ChEBI" id="CHEBI:18420"/>
    </ligand>
</feature>
<feature type="binding site" evidence="1">
    <location>
        <position position="491"/>
    </location>
    <ligand>
        <name>Mg(2+)</name>
        <dbReference type="ChEBI" id="CHEBI:18420"/>
    </ligand>
</feature>
<feature type="binding site" evidence="1">
    <location>
        <position position="493"/>
    </location>
    <ligand>
        <name>Mg(2+)</name>
        <dbReference type="ChEBI" id="CHEBI:18420"/>
    </ligand>
</feature>
<gene>
    <name evidence="1" type="primary">rpoC1</name>
    <name type="ordered locus">PS107</name>
</gene>
<protein>
    <recommendedName>
        <fullName evidence="1">DNA-directed RNA polymerase subunit beta'</fullName>
        <ecNumber evidence="1">2.7.7.6</ecNumber>
    </recommendedName>
    <alternativeName>
        <fullName evidence="1">PEP</fullName>
    </alternativeName>
    <alternativeName>
        <fullName evidence="1">Plastid-encoded RNA polymerase subunit beta'</fullName>
        <shortName evidence="1">RNA polymerase subunit beta'</shortName>
    </alternativeName>
</protein>